<proteinExistence type="inferred from homology"/>
<sequence length="273" mass="30672">MERSVFYISDGTAITAEVLGHAVLSQFPVKATTFTLPFVESATRAQEVCEKINEIYRETGVRPLVFYSIISPEVRELIQHSEGFCQDIVQALVAPLQGELGVSPQPVLNRTHGLTESNLGKYDARIAAIDYALAHDDGISLRNLDQAQVILLGVSRCGKTPTSLYLAMQFGIRAANYPFIADDMDNLQLPAALKPFQHKLFGLTINPERLAAIREERRENSRYASLRQCRMEVGEVEALFRKNQIRYLNSTNYSVEEISTKILDILGMSRRMF</sequence>
<name>PSRP_YERE8</name>
<reference key="1">
    <citation type="journal article" date="2006" name="PLoS Genet.">
        <title>The complete genome sequence and comparative genome analysis of the high pathogenicity Yersinia enterocolitica strain 8081.</title>
        <authorList>
            <person name="Thomson N.R."/>
            <person name="Howard S."/>
            <person name="Wren B.W."/>
            <person name="Holden M.T.G."/>
            <person name="Crossman L."/>
            <person name="Challis G.L."/>
            <person name="Churcher C."/>
            <person name="Mungall K."/>
            <person name="Brooks K."/>
            <person name="Chillingworth T."/>
            <person name="Feltwell T."/>
            <person name="Abdellah Z."/>
            <person name="Hauser H."/>
            <person name="Jagels K."/>
            <person name="Maddison M."/>
            <person name="Moule S."/>
            <person name="Sanders M."/>
            <person name="Whitehead S."/>
            <person name="Quail M.A."/>
            <person name="Dougan G."/>
            <person name="Parkhill J."/>
            <person name="Prentice M.B."/>
        </authorList>
    </citation>
    <scope>NUCLEOTIDE SEQUENCE [LARGE SCALE GENOMIC DNA]</scope>
    <source>
        <strain>NCTC 13174 / 8081</strain>
    </source>
</reference>
<gene>
    <name type="ordered locus">YE2177</name>
</gene>
<organism>
    <name type="scientific">Yersinia enterocolitica serotype O:8 / biotype 1B (strain NCTC 13174 / 8081)</name>
    <dbReference type="NCBI Taxonomy" id="393305"/>
    <lineage>
        <taxon>Bacteria</taxon>
        <taxon>Pseudomonadati</taxon>
        <taxon>Pseudomonadota</taxon>
        <taxon>Gammaproteobacteria</taxon>
        <taxon>Enterobacterales</taxon>
        <taxon>Yersiniaceae</taxon>
        <taxon>Yersinia</taxon>
    </lineage>
</organism>
<evidence type="ECO:0000255" key="1">
    <source>
        <dbReference type="HAMAP-Rule" id="MF_01062"/>
    </source>
</evidence>
<protein>
    <recommendedName>
        <fullName evidence="1">Putative phosphoenolpyruvate synthase regulatory protein</fullName>
        <shortName evidence="1">PEP synthase regulatory protein</shortName>
        <shortName evidence="1">PSRP</shortName>
        <ecNumber evidence="1">2.7.11.33</ecNumber>
        <ecNumber evidence="1">2.7.4.28</ecNumber>
    </recommendedName>
    <alternativeName>
        <fullName evidence="1">Pyruvate, water dikinase regulatory protein</fullName>
    </alternativeName>
</protein>
<feature type="chain" id="PRO_0000316757" description="Putative phosphoenolpyruvate synthase regulatory protein">
    <location>
        <begin position="1"/>
        <end position="273"/>
    </location>
</feature>
<feature type="binding site" evidence="1">
    <location>
        <begin position="153"/>
        <end position="160"/>
    </location>
    <ligand>
        <name>ADP</name>
        <dbReference type="ChEBI" id="CHEBI:456216"/>
    </ligand>
</feature>
<comment type="function">
    <text evidence="1">Bifunctional serine/threonine kinase and phosphorylase involved in the regulation of the phosphoenolpyruvate synthase (PEPS) by catalyzing its phosphorylation/dephosphorylation.</text>
</comment>
<comment type="catalytic activity">
    <reaction evidence="1">
        <text>[pyruvate, water dikinase] + ADP = [pyruvate, water dikinase]-phosphate + AMP + H(+)</text>
        <dbReference type="Rhea" id="RHEA:46020"/>
        <dbReference type="Rhea" id="RHEA-COMP:11425"/>
        <dbReference type="Rhea" id="RHEA-COMP:11426"/>
        <dbReference type="ChEBI" id="CHEBI:15378"/>
        <dbReference type="ChEBI" id="CHEBI:43176"/>
        <dbReference type="ChEBI" id="CHEBI:68546"/>
        <dbReference type="ChEBI" id="CHEBI:456215"/>
        <dbReference type="ChEBI" id="CHEBI:456216"/>
        <dbReference type="EC" id="2.7.11.33"/>
    </reaction>
</comment>
<comment type="catalytic activity">
    <reaction evidence="1">
        <text>[pyruvate, water dikinase]-phosphate + phosphate + H(+) = [pyruvate, water dikinase] + diphosphate</text>
        <dbReference type="Rhea" id="RHEA:48580"/>
        <dbReference type="Rhea" id="RHEA-COMP:11425"/>
        <dbReference type="Rhea" id="RHEA-COMP:11426"/>
        <dbReference type="ChEBI" id="CHEBI:15378"/>
        <dbReference type="ChEBI" id="CHEBI:33019"/>
        <dbReference type="ChEBI" id="CHEBI:43176"/>
        <dbReference type="ChEBI" id="CHEBI:43474"/>
        <dbReference type="ChEBI" id="CHEBI:68546"/>
        <dbReference type="EC" id="2.7.4.28"/>
    </reaction>
</comment>
<comment type="similarity">
    <text evidence="1">Belongs to the pyruvate, phosphate/water dikinase regulatory protein family. PSRP subfamily.</text>
</comment>
<accession>A1JPI0</accession>
<dbReference type="EC" id="2.7.11.33" evidence="1"/>
<dbReference type="EC" id="2.7.4.28" evidence="1"/>
<dbReference type="EMBL" id="AM286415">
    <property type="protein sequence ID" value="CAL12247.1"/>
    <property type="molecule type" value="Genomic_DNA"/>
</dbReference>
<dbReference type="RefSeq" id="WP_005169416.1">
    <property type="nucleotide sequence ID" value="NC_008800.1"/>
</dbReference>
<dbReference type="RefSeq" id="YP_001006417.1">
    <property type="nucleotide sequence ID" value="NC_008800.1"/>
</dbReference>
<dbReference type="SMR" id="A1JPI0"/>
<dbReference type="KEGG" id="yen:YE2177"/>
<dbReference type="PATRIC" id="fig|393305.7.peg.2342"/>
<dbReference type="eggNOG" id="COG1806">
    <property type="taxonomic scope" value="Bacteria"/>
</dbReference>
<dbReference type="HOGENOM" id="CLU_046206_1_0_6"/>
<dbReference type="OrthoDB" id="9782201at2"/>
<dbReference type="Proteomes" id="UP000000642">
    <property type="component" value="Chromosome"/>
</dbReference>
<dbReference type="GO" id="GO:0043531">
    <property type="term" value="F:ADP binding"/>
    <property type="evidence" value="ECO:0007669"/>
    <property type="project" value="UniProtKB-UniRule"/>
</dbReference>
<dbReference type="GO" id="GO:0005524">
    <property type="term" value="F:ATP binding"/>
    <property type="evidence" value="ECO:0007669"/>
    <property type="project" value="InterPro"/>
</dbReference>
<dbReference type="GO" id="GO:0003677">
    <property type="term" value="F:DNA binding"/>
    <property type="evidence" value="ECO:0007669"/>
    <property type="project" value="InterPro"/>
</dbReference>
<dbReference type="GO" id="GO:0016776">
    <property type="term" value="F:phosphotransferase activity, phosphate group as acceptor"/>
    <property type="evidence" value="ECO:0007669"/>
    <property type="project" value="UniProtKB-UniRule"/>
</dbReference>
<dbReference type="GO" id="GO:0004674">
    <property type="term" value="F:protein serine/threonine kinase activity"/>
    <property type="evidence" value="ECO:0007669"/>
    <property type="project" value="UniProtKB-UniRule"/>
</dbReference>
<dbReference type="GO" id="GO:0006355">
    <property type="term" value="P:regulation of DNA-templated transcription"/>
    <property type="evidence" value="ECO:0007669"/>
    <property type="project" value="InterPro"/>
</dbReference>
<dbReference type="HAMAP" id="MF_01062">
    <property type="entry name" value="PSRP"/>
    <property type="match status" value="1"/>
</dbReference>
<dbReference type="InterPro" id="IPR005177">
    <property type="entry name" value="Kinase-pyrophosphorylase"/>
</dbReference>
<dbReference type="InterPro" id="IPR026530">
    <property type="entry name" value="PSRP"/>
</dbReference>
<dbReference type="InterPro" id="IPR008917">
    <property type="entry name" value="TF_DNA-bd_sf"/>
</dbReference>
<dbReference type="NCBIfam" id="NF003742">
    <property type="entry name" value="PRK05339.1"/>
    <property type="match status" value="1"/>
</dbReference>
<dbReference type="PANTHER" id="PTHR31756">
    <property type="entry name" value="PYRUVATE, PHOSPHATE DIKINASE REGULATORY PROTEIN 1, CHLOROPLASTIC"/>
    <property type="match status" value="1"/>
</dbReference>
<dbReference type="PANTHER" id="PTHR31756:SF3">
    <property type="entry name" value="PYRUVATE, PHOSPHATE DIKINASE REGULATORY PROTEIN 1, CHLOROPLASTIC"/>
    <property type="match status" value="1"/>
</dbReference>
<dbReference type="Pfam" id="PF03618">
    <property type="entry name" value="Kinase-PPPase"/>
    <property type="match status" value="1"/>
</dbReference>
<dbReference type="SUPFAM" id="SSF47454">
    <property type="entry name" value="A DNA-binding domain in eukaryotic transcription factors"/>
    <property type="match status" value="1"/>
</dbReference>
<keyword id="KW-0418">Kinase</keyword>
<keyword id="KW-0547">Nucleotide-binding</keyword>
<keyword id="KW-0723">Serine/threonine-protein kinase</keyword>
<keyword id="KW-0808">Transferase</keyword>